<accession>B0UN04</accession>
<organism>
    <name type="scientific">Methylobacterium sp. (strain 4-46)</name>
    <dbReference type="NCBI Taxonomy" id="426117"/>
    <lineage>
        <taxon>Bacteria</taxon>
        <taxon>Pseudomonadati</taxon>
        <taxon>Pseudomonadota</taxon>
        <taxon>Alphaproteobacteria</taxon>
        <taxon>Hyphomicrobiales</taxon>
        <taxon>Methylobacteriaceae</taxon>
        <taxon>Methylobacterium</taxon>
    </lineage>
</organism>
<protein>
    <recommendedName>
        <fullName evidence="1">Histidinol-phosphate aminotransferase</fullName>
        <ecNumber evidence="1">2.6.1.9</ecNumber>
    </recommendedName>
    <alternativeName>
        <fullName evidence="1">Imidazole acetol-phosphate transaminase</fullName>
    </alternativeName>
</protein>
<dbReference type="EC" id="2.6.1.9" evidence="1"/>
<dbReference type="EMBL" id="CP000943">
    <property type="protein sequence ID" value="ACA19581.1"/>
    <property type="molecule type" value="Genomic_DNA"/>
</dbReference>
<dbReference type="RefSeq" id="WP_012334967.1">
    <property type="nucleotide sequence ID" value="NC_010511.1"/>
</dbReference>
<dbReference type="SMR" id="B0UN04"/>
<dbReference type="STRING" id="426117.M446_5257"/>
<dbReference type="KEGG" id="met:M446_5257"/>
<dbReference type="eggNOG" id="COG0079">
    <property type="taxonomic scope" value="Bacteria"/>
</dbReference>
<dbReference type="HOGENOM" id="CLU_017584_3_3_5"/>
<dbReference type="UniPathway" id="UPA00031">
    <property type="reaction ID" value="UER00012"/>
</dbReference>
<dbReference type="GO" id="GO:0004400">
    <property type="term" value="F:histidinol-phosphate transaminase activity"/>
    <property type="evidence" value="ECO:0007669"/>
    <property type="project" value="UniProtKB-UniRule"/>
</dbReference>
<dbReference type="GO" id="GO:0030170">
    <property type="term" value="F:pyridoxal phosphate binding"/>
    <property type="evidence" value="ECO:0007669"/>
    <property type="project" value="InterPro"/>
</dbReference>
<dbReference type="GO" id="GO:0000105">
    <property type="term" value="P:L-histidine biosynthetic process"/>
    <property type="evidence" value="ECO:0007669"/>
    <property type="project" value="UniProtKB-UniRule"/>
</dbReference>
<dbReference type="CDD" id="cd00609">
    <property type="entry name" value="AAT_like"/>
    <property type="match status" value="1"/>
</dbReference>
<dbReference type="Gene3D" id="3.90.1150.10">
    <property type="entry name" value="Aspartate Aminotransferase, domain 1"/>
    <property type="match status" value="1"/>
</dbReference>
<dbReference type="Gene3D" id="3.40.640.10">
    <property type="entry name" value="Type I PLP-dependent aspartate aminotransferase-like (Major domain)"/>
    <property type="match status" value="1"/>
</dbReference>
<dbReference type="HAMAP" id="MF_01023">
    <property type="entry name" value="HisC_aminotrans_2"/>
    <property type="match status" value="1"/>
</dbReference>
<dbReference type="InterPro" id="IPR001917">
    <property type="entry name" value="Aminotrans_II_pyridoxalP_BS"/>
</dbReference>
<dbReference type="InterPro" id="IPR004839">
    <property type="entry name" value="Aminotransferase_I/II_large"/>
</dbReference>
<dbReference type="InterPro" id="IPR005861">
    <property type="entry name" value="HisP_aminotrans"/>
</dbReference>
<dbReference type="InterPro" id="IPR050106">
    <property type="entry name" value="HistidinolP_aminotransfase"/>
</dbReference>
<dbReference type="InterPro" id="IPR015424">
    <property type="entry name" value="PyrdxlP-dep_Trfase"/>
</dbReference>
<dbReference type="InterPro" id="IPR015421">
    <property type="entry name" value="PyrdxlP-dep_Trfase_major"/>
</dbReference>
<dbReference type="InterPro" id="IPR015422">
    <property type="entry name" value="PyrdxlP-dep_Trfase_small"/>
</dbReference>
<dbReference type="NCBIfam" id="TIGR01141">
    <property type="entry name" value="hisC"/>
    <property type="match status" value="1"/>
</dbReference>
<dbReference type="PANTHER" id="PTHR43643:SF3">
    <property type="entry name" value="HISTIDINOL-PHOSPHATE AMINOTRANSFERASE"/>
    <property type="match status" value="1"/>
</dbReference>
<dbReference type="PANTHER" id="PTHR43643">
    <property type="entry name" value="HISTIDINOL-PHOSPHATE AMINOTRANSFERASE 2"/>
    <property type="match status" value="1"/>
</dbReference>
<dbReference type="Pfam" id="PF00155">
    <property type="entry name" value="Aminotran_1_2"/>
    <property type="match status" value="1"/>
</dbReference>
<dbReference type="SUPFAM" id="SSF53383">
    <property type="entry name" value="PLP-dependent transferases"/>
    <property type="match status" value="1"/>
</dbReference>
<dbReference type="PROSITE" id="PS00599">
    <property type="entry name" value="AA_TRANSFER_CLASS_2"/>
    <property type="match status" value="1"/>
</dbReference>
<comment type="catalytic activity">
    <reaction evidence="1">
        <text>L-histidinol phosphate + 2-oxoglutarate = 3-(imidazol-4-yl)-2-oxopropyl phosphate + L-glutamate</text>
        <dbReference type="Rhea" id="RHEA:23744"/>
        <dbReference type="ChEBI" id="CHEBI:16810"/>
        <dbReference type="ChEBI" id="CHEBI:29985"/>
        <dbReference type="ChEBI" id="CHEBI:57766"/>
        <dbReference type="ChEBI" id="CHEBI:57980"/>
        <dbReference type="EC" id="2.6.1.9"/>
    </reaction>
</comment>
<comment type="cofactor">
    <cofactor evidence="1">
        <name>pyridoxal 5'-phosphate</name>
        <dbReference type="ChEBI" id="CHEBI:597326"/>
    </cofactor>
</comment>
<comment type="pathway">
    <text evidence="1">Amino-acid biosynthesis; L-histidine biosynthesis; L-histidine from 5-phospho-alpha-D-ribose 1-diphosphate: step 7/9.</text>
</comment>
<comment type="subunit">
    <text evidence="1">Homodimer.</text>
</comment>
<comment type="similarity">
    <text evidence="1">Belongs to the class-II pyridoxal-phosphate-dependent aminotransferase family. Histidinol-phosphate aminotransferase subfamily.</text>
</comment>
<evidence type="ECO:0000255" key="1">
    <source>
        <dbReference type="HAMAP-Rule" id="MF_01023"/>
    </source>
</evidence>
<proteinExistence type="inferred from homology"/>
<gene>
    <name evidence="1" type="primary">hisC</name>
    <name type="ordered locus">M446_5257</name>
</gene>
<reference key="1">
    <citation type="submission" date="2008-02" db="EMBL/GenBank/DDBJ databases">
        <title>Complete sequence of chromosome of Methylobacterium sp. 4-46.</title>
        <authorList>
            <consortium name="US DOE Joint Genome Institute"/>
            <person name="Copeland A."/>
            <person name="Lucas S."/>
            <person name="Lapidus A."/>
            <person name="Glavina del Rio T."/>
            <person name="Dalin E."/>
            <person name="Tice H."/>
            <person name="Bruce D."/>
            <person name="Goodwin L."/>
            <person name="Pitluck S."/>
            <person name="Chertkov O."/>
            <person name="Brettin T."/>
            <person name="Detter J.C."/>
            <person name="Han C."/>
            <person name="Kuske C.R."/>
            <person name="Schmutz J."/>
            <person name="Larimer F."/>
            <person name="Land M."/>
            <person name="Hauser L."/>
            <person name="Kyrpides N."/>
            <person name="Ivanova N."/>
            <person name="Marx C.J."/>
            <person name="Richardson P."/>
        </authorList>
    </citation>
    <scope>NUCLEOTIDE SEQUENCE [LARGE SCALE GENOMIC DNA]</scope>
    <source>
        <strain>4-46</strain>
    </source>
</reference>
<feature type="chain" id="PRO_1000149105" description="Histidinol-phosphate aminotransferase">
    <location>
        <begin position="1"/>
        <end position="370"/>
    </location>
</feature>
<feature type="modified residue" description="N6-(pyridoxal phosphate)lysine" evidence="1">
    <location>
        <position position="223"/>
    </location>
</feature>
<sequence>MSAALRPVPRPGVLAIEAYVPGKSAAPAGVKLHKLSSNETPLGPSPAAVAAMRETASHLELYPDGSAAALRRAIAGKYGLDPARIVCGAGSDELLSLLTYAFMGPGDEGIYSEYGFLVYRIAILAAGGTPVVAPERDHTADVDAILAAVTPRTRIVYLANPNNPTGTYLPFDEVRRLHAGLPGDVLLVLDAAYAEYVRRNDYAAGLELVAESENVVMTRTFSKAYGLAALRIGWMVAPPAVADAVNRIRGPFNLGSPAIAAGAAAVADDAHIAAAVAHNEEWLPKVTRALTEIGLSVTPSVGNFVLIHFPDAPGRGAAEADAFLTARGLILRRVAAYGLPHALRMTIGSAEANEAVIAALRAFVKDHPDA</sequence>
<name>HIS8_METS4</name>
<keyword id="KW-0028">Amino-acid biosynthesis</keyword>
<keyword id="KW-0032">Aminotransferase</keyword>
<keyword id="KW-0368">Histidine biosynthesis</keyword>
<keyword id="KW-0663">Pyridoxal phosphate</keyword>
<keyword id="KW-0808">Transferase</keyword>